<proteinExistence type="inferred from homology"/>
<name>IF1_HAHCH</name>
<comment type="function">
    <text evidence="1">One of the essential components for the initiation of protein synthesis. Stabilizes the binding of IF-2 and IF-3 on the 30S subunit to which N-formylmethionyl-tRNA(fMet) subsequently binds. Helps modulate mRNA selection, yielding the 30S pre-initiation complex (PIC). Upon addition of the 50S ribosomal subunit IF-1, IF-2 and IF-3 are released leaving the mature 70S translation initiation complex.</text>
</comment>
<comment type="subunit">
    <text evidence="1">Component of the 30S ribosomal translation pre-initiation complex which assembles on the 30S ribosome in the order IF-2 and IF-3, IF-1 and N-formylmethionyl-tRNA(fMet); mRNA recruitment can occur at any time during PIC assembly.</text>
</comment>
<comment type="subcellular location">
    <subcellularLocation>
        <location evidence="1">Cytoplasm</location>
    </subcellularLocation>
</comment>
<comment type="similarity">
    <text evidence="1">Belongs to the IF-1 family.</text>
</comment>
<accession>Q2SJL1</accession>
<keyword id="KW-0963">Cytoplasm</keyword>
<keyword id="KW-0396">Initiation factor</keyword>
<keyword id="KW-0648">Protein biosynthesis</keyword>
<keyword id="KW-1185">Reference proteome</keyword>
<keyword id="KW-0694">RNA-binding</keyword>
<keyword id="KW-0699">rRNA-binding</keyword>
<organism>
    <name type="scientific">Hahella chejuensis (strain KCTC 2396)</name>
    <dbReference type="NCBI Taxonomy" id="349521"/>
    <lineage>
        <taxon>Bacteria</taxon>
        <taxon>Pseudomonadati</taxon>
        <taxon>Pseudomonadota</taxon>
        <taxon>Gammaproteobacteria</taxon>
        <taxon>Oceanospirillales</taxon>
        <taxon>Hahellaceae</taxon>
        <taxon>Hahella</taxon>
    </lineage>
</organism>
<dbReference type="EMBL" id="CP000155">
    <property type="protein sequence ID" value="ABC29163.1"/>
    <property type="molecule type" value="Genomic_DNA"/>
</dbReference>
<dbReference type="RefSeq" id="WP_011396232.1">
    <property type="nucleotide sequence ID" value="NC_007645.1"/>
</dbReference>
<dbReference type="SMR" id="Q2SJL1"/>
<dbReference type="STRING" id="349521.HCH_02340"/>
<dbReference type="KEGG" id="hch:HCH_02340"/>
<dbReference type="eggNOG" id="COG0361">
    <property type="taxonomic scope" value="Bacteria"/>
</dbReference>
<dbReference type="HOGENOM" id="CLU_151267_1_0_6"/>
<dbReference type="OrthoDB" id="9803250at2"/>
<dbReference type="Proteomes" id="UP000000238">
    <property type="component" value="Chromosome"/>
</dbReference>
<dbReference type="GO" id="GO:0005829">
    <property type="term" value="C:cytosol"/>
    <property type="evidence" value="ECO:0007669"/>
    <property type="project" value="TreeGrafter"/>
</dbReference>
<dbReference type="GO" id="GO:0043022">
    <property type="term" value="F:ribosome binding"/>
    <property type="evidence" value="ECO:0007669"/>
    <property type="project" value="UniProtKB-UniRule"/>
</dbReference>
<dbReference type="GO" id="GO:0019843">
    <property type="term" value="F:rRNA binding"/>
    <property type="evidence" value="ECO:0007669"/>
    <property type="project" value="UniProtKB-UniRule"/>
</dbReference>
<dbReference type="GO" id="GO:0003743">
    <property type="term" value="F:translation initiation factor activity"/>
    <property type="evidence" value="ECO:0007669"/>
    <property type="project" value="UniProtKB-UniRule"/>
</dbReference>
<dbReference type="CDD" id="cd04451">
    <property type="entry name" value="S1_IF1"/>
    <property type="match status" value="1"/>
</dbReference>
<dbReference type="FunFam" id="2.40.50.140:FF:000002">
    <property type="entry name" value="Translation initiation factor IF-1"/>
    <property type="match status" value="1"/>
</dbReference>
<dbReference type="Gene3D" id="2.40.50.140">
    <property type="entry name" value="Nucleic acid-binding proteins"/>
    <property type="match status" value="1"/>
</dbReference>
<dbReference type="HAMAP" id="MF_00075">
    <property type="entry name" value="IF_1"/>
    <property type="match status" value="1"/>
</dbReference>
<dbReference type="InterPro" id="IPR012340">
    <property type="entry name" value="NA-bd_OB-fold"/>
</dbReference>
<dbReference type="InterPro" id="IPR006196">
    <property type="entry name" value="RNA-binding_domain_S1_IF1"/>
</dbReference>
<dbReference type="InterPro" id="IPR003029">
    <property type="entry name" value="S1_domain"/>
</dbReference>
<dbReference type="InterPro" id="IPR004368">
    <property type="entry name" value="TIF_IF1"/>
</dbReference>
<dbReference type="NCBIfam" id="TIGR00008">
    <property type="entry name" value="infA"/>
    <property type="match status" value="1"/>
</dbReference>
<dbReference type="PANTHER" id="PTHR33370">
    <property type="entry name" value="TRANSLATION INITIATION FACTOR IF-1, CHLOROPLASTIC"/>
    <property type="match status" value="1"/>
</dbReference>
<dbReference type="PANTHER" id="PTHR33370:SF1">
    <property type="entry name" value="TRANSLATION INITIATION FACTOR IF-1, CHLOROPLASTIC"/>
    <property type="match status" value="1"/>
</dbReference>
<dbReference type="Pfam" id="PF01176">
    <property type="entry name" value="eIF-1a"/>
    <property type="match status" value="1"/>
</dbReference>
<dbReference type="SMART" id="SM00316">
    <property type="entry name" value="S1"/>
    <property type="match status" value="1"/>
</dbReference>
<dbReference type="SUPFAM" id="SSF50249">
    <property type="entry name" value="Nucleic acid-binding proteins"/>
    <property type="match status" value="1"/>
</dbReference>
<dbReference type="PROSITE" id="PS50832">
    <property type="entry name" value="S1_IF1_TYPE"/>
    <property type="match status" value="1"/>
</dbReference>
<evidence type="ECO:0000255" key="1">
    <source>
        <dbReference type="HAMAP-Rule" id="MF_00075"/>
    </source>
</evidence>
<sequence length="72" mass="8237">MAKEGNIEMEGTIIDTLPNTMFRVQLENGHVVTAHISGKMRKNYIRILTGDKVKVEMTPYDLSKGRIVYRAR</sequence>
<feature type="chain" id="PRO_0000263809" description="Translation initiation factor IF-1">
    <location>
        <begin position="1"/>
        <end position="72"/>
    </location>
</feature>
<feature type="domain" description="S1-like" evidence="1">
    <location>
        <begin position="1"/>
        <end position="72"/>
    </location>
</feature>
<reference key="1">
    <citation type="journal article" date="2005" name="Nucleic Acids Res.">
        <title>Genomic blueprint of Hahella chejuensis, a marine microbe producing an algicidal agent.</title>
        <authorList>
            <person name="Jeong H."/>
            <person name="Yim J.H."/>
            <person name="Lee C."/>
            <person name="Choi S.-H."/>
            <person name="Park Y.K."/>
            <person name="Yoon S.H."/>
            <person name="Hur C.-G."/>
            <person name="Kang H.-Y."/>
            <person name="Kim D."/>
            <person name="Lee H.H."/>
            <person name="Park K.H."/>
            <person name="Park S.-H."/>
            <person name="Park H.-S."/>
            <person name="Lee H.K."/>
            <person name="Oh T.K."/>
            <person name="Kim J.F."/>
        </authorList>
    </citation>
    <scope>NUCLEOTIDE SEQUENCE [LARGE SCALE GENOMIC DNA]</scope>
    <source>
        <strain>KCTC 2396</strain>
    </source>
</reference>
<gene>
    <name evidence="1" type="primary">infA</name>
    <name type="ordered locus">HCH_02340</name>
</gene>
<protein>
    <recommendedName>
        <fullName evidence="1">Translation initiation factor IF-1</fullName>
    </recommendedName>
</protein>